<organism>
    <name type="scientific">Pethia conchonius</name>
    <name type="common">Rosy barb</name>
    <name type="synonym">Puntius conchonius</name>
    <dbReference type="NCBI Taxonomy" id="27708"/>
    <lineage>
        <taxon>Eukaryota</taxon>
        <taxon>Metazoa</taxon>
        <taxon>Chordata</taxon>
        <taxon>Craniata</taxon>
        <taxon>Vertebrata</taxon>
        <taxon>Euteleostomi</taxon>
        <taxon>Actinopterygii</taxon>
        <taxon>Neopterygii</taxon>
        <taxon>Teleostei</taxon>
        <taxon>Ostariophysi</taxon>
        <taxon>Cypriniformes</taxon>
        <taxon>Cyprinidae</taxon>
        <taxon>Smiliogastrinae</taxon>
        <taxon>Pethia</taxon>
    </lineage>
</organism>
<accession>Q9B2C4</accession>
<name>CYB_PETCC</name>
<gene>
    <name type="primary">mt-cyb</name>
    <name type="synonym">cob</name>
    <name type="synonym">cytb</name>
    <name type="synonym">mtcyb</name>
</gene>
<reference key="1">
    <citation type="journal article" date="2001" name="Mol. Phylogenet. Evol.">
        <title>Evidence of a cenozoic Betic-Kabilian Connection based on freshwater fish phylogeography (Luciobarbus, Cyprinidae).</title>
        <authorList>
            <person name="Machordom A."/>
            <person name="Doadrio I."/>
        </authorList>
    </citation>
    <scope>NUCLEOTIDE SEQUENCE [GENOMIC DNA]</scope>
</reference>
<keyword id="KW-0249">Electron transport</keyword>
<keyword id="KW-0349">Heme</keyword>
<keyword id="KW-0408">Iron</keyword>
<keyword id="KW-0472">Membrane</keyword>
<keyword id="KW-0479">Metal-binding</keyword>
<keyword id="KW-0496">Mitochondrion</keyword>
<keyword id="KW-0999">Mitochondrion inner membrane</keyword>
<keyword id="KW-0679">Respiratory chain</keyword>
<keyword id="KW-0812">Transmembrane</keyword>
<keyword id="KW-1133">Transmembrane helix</keyword>
<keyword id="KW-0813">Transport</keyword>
<keyword id="KW-0830">Ubiquinone</keyword>
<comment type="function">
    <text evidence="2">Component of the ubiquinol-cytochrome c reductase complex (complex III or cytochrome b-c1 complex) that is part of the mitochondrial respiratory chain. The b-c1 complex mediates electron transfer from ubiquinol to cytochrome c. Contributes to the generation of a proton gradient across the mitochondrial membrane that is then used for ATP synthesis.</text>
</comment>
<comment type="cofactor">
    <cofactor evidence="2">
        <name>heme b</name>
        <dbReference type="ChEBI" id="CHEBI:60344"/>
    </cofactor>
    <text evidence="2">Binds 2 heme b groups non-covalently.</text>
</comment>
<comment type="subunit">
    <text evidence="2">The cytochrome bc1 complex contains 3 respiratory subunits (MT-CYB, CYC1 and UQCRFS1), 2 core proteins (UQCRC1 and UQCRC2) and probably 6 low-molecular weight proteins.</text>
</comment>
<comment type="subcellular location">
    <subcellularLocation>
        <location evidence="2">Mitochondrion inner membrane</location>
        <topology evidence="2">Multi-pass membrane protein</topology>
    </subcellularLocation>
</comment>
<comment type="miscellaneous">
    <text evidence="1">Heme 1 (or BL or b562) is low-potential and absorbs at about 562 nm, and heme 2 (or BH or b566) is high-potential and absorbs at about 566 nm.</text>
</comment>
<comment type="similarity">
    <text evidence="3 4">Belongs to the cytochrome b family.</text>
</comment>
<comment type="caution">
    <text evidence="2">The full-length protein contains only eight transmembrane helices, not nine as predicted by bioinformatics tools.</text>
</comment>
<protein>
    <recommendedName>
        <fullName>Cytochrome b</fullName>
    </recommendedName>
    <alternativeName>
        <fullName>Complex III subunit 3</fullName>
    </alternativeName>
    <alternativeName>
        <fullName>Complex III subunit III</fullName>
    </alternativeName>
    <alternativeName>
        <fullName>Cytochrome b-c1 complex subunit 3</fullName>
    </alternativeName>
    <alternativeName>
        <fullName>Ubiquinol-cytochrome-c reductase complex cytochrome b subunit</fullName>
    </alternativeName>
</protein>
<geneLocation type="mitochondrion"/>
<dbReference type="EMBL" id="AY004751">
    <property type="protein sequence ID" value="AAK12998.1"/>
    <property type="molecule type" value="Genomic_DNA"/>
</dbReference>
<dbReference type="SMR" id="Q9B2C4"/>
<dbReference type="GO" id="GO:0005743">
    <property type="term" value="C:mitochondrial inner membrane"/>
    <property type="evidence" value="ECO:0007669"/>
    <property type="project" value="UniProtKB-SubCell"/>
</dbReference>
<dbReference type="GO" id="GO:0045275">
    <property type="term" value="C:respiratory chain complex III"/>
    <property type="evidence" value="ECO:0007669"/>
    <property type="project" value="InterPro"/>
</dbReference>
<dbReference type="GO" id="GO:0046872">
    <property type="term" value="F:metal ion binding"/>
    <property type="evidence" value="ECO:0007669"/>
    <property type="project" value="UniProtKB-KW"/>
</dbReference>
<dbReference type="GO" id="GO:0008121">
    <property type="term" value="F:ubiquinol-cytochrome-c reductase activity"/>
    <property type="evidence" value="ECO:0007669"/>
    <property type="project" value="InterPro"/>
</dbReference>
<dbReference type="GO" id="GO:0006122">
    <property type="term" value="P:mitochondrial electron transport, ubiquinol to cytochrome c"/>
    <property type="evidence" value="ECO:0007669"/>
    <property type="project" value="TreeGrafter"/>
</dbReference>
<dbReference type="CDD" id="cd00290">
    <property type="entry name" value="cytochrome_b_C"/>
    <property type="match status" value="1"/>
</dbReference>
<dbReference type="CDD" id="cd00284">
    <property type="entry name" value="Cytochrome_b_N"/>
    <property type="match status" value="1"/>
</dbReference>
<dbReference type="FunFam" id="1.20.810.10:FF:000002">
    <property type="entry name" value="Cytochrome b"/>
    <property type="match status" value="1"/>
</dbReference>
<dbReference type="Gene3D" id="1.20.810.10">
    <property type="entry name" value="Cytochrome Bc1 Complex, Chain C"/>
    <property type="match status" value="1"/>
</dbReference>
<dbReference type="InterPro" id="IPR005798">
    <property type="entry name" value="Cyt_b/b6_C"/>
</dbReference>
<dbReference type="InterPro" id="IPR036150">
    <property type="entry name" value="Cyt_b/b6_C_sf"/>
</dbReference>
<dbReference type="InterPro" id="IPR005797">
    <property type="entry name" value="Cyt_b/b6_N"/>
</dbReference>
<dbReference type="InterPro" id="IPR027387">
    <property type="entry name" value="Cytb/b6-like_sf"/>
</dbReference>
<dbReference type="InterPro" id="IPR030689">
    <property type="entry name" value="Cytochrome_b"/>
</dbReference>
<dbReference type="InterPro" id="IPR048260">
    <property type="entry name" value="Cytochrome_b_C_euk/bac"/>
</dbReference>
<dbReference type="InterPro" id="IPR048259">
    <property type="entry name" value="Cytochrome_b_N_euk/bac"/>
</dbReference>
<dbReference type="InterPro" id="IPR016174">
    <property type="entry name" value="Di-haem_cyt_TM"/>
</dbReference>
<dbReference type="PANTHER" id="PTHR19271">
    <property type="entry name" value="CYTOCHROME B"/>
    <property type="match status" value="1"/>
</dbReference>
<dbReference type="PANTHER" id="PTHR19271:SF16">
    <property type="entry name" value="CYTOCHROME B"/>
    <property type="match status" value="1"/>
</dbReference>
<dbReference type="Pfam" id="PF00032">
    <property type="entry name" value="Cytochrom_B_C"/>
    <property type="match status" value="1"/>
</dbReference>
<dbReference type="Pfam" id="PF00033">
    <property type="entry name" value="Cytochrome_B"/>
    <property type="match status" value="1"/>
</dbReference>
<dbReference type="PIRSF" id="PIRSF038885">
    <property type="entry name" value="COB"/>
    <property type="match status" value="1"/>
</dbReference>
<dbReference type="SUPFAM" id="SSF81648">
    <property type="entry name" value="a domain/subunit of cytochrome bc1 complex (Ubiquinol-cytochrome c reductase)"/>
    <property type="match status" value="1"/>
</dbReference>
<dbReference type="SUPFAM" id="SSF81342">
    <property type="entry name" value="Transmembrane di-heme cytochromes"/>
    <property type="match status" value="1"/>
</dbReference>
<dbReference type="PROSITE" id="PS51003">
    <property type="entry name" value="CYTB_CTER"/>
    <property type="match status" value="1"/>
</dbReference>
<dbReference type="PROSITE" id="PS51002">
    <property type="entry name" value="CYTB_NTER"/>
    <property type="match status" value="1"/>
</dbReference>
<sequence length="380" mass="42732">MASLRKTHPLIKIANGALVDLPAPSNISSWWNFGSLLGLCLITQILTGLFLAMHYTSDISTAFSSVMHICRDVNYGWLIRNMHANGASFFFICIYMHVARGLYYGSYLYKETWNIGVVLLLLVMMTAFVGYVLPWGQMSFWGATVITNLLSAVPYMGDMLVQWIWGGFSVDNATLTRFFAFHFLLPFIVAAMTILHLLFLHETGSNNPIGLNSDADKISFHPYFTYKDLLGFAVMLLALTMLALFSPNLLGDPENFTPANPLVTPPHIKPEWYFLFAYAILRSIPNKLGVVLALLFSILVLMVVPMLHTSKQRGLTFRPITQFLFWTLVADMIILTWIGGMPVEHPFIIIGQIASVLYFALFLILMPLAGWLENKTLKLA</sequence>
<feature type="chain" id="PRO_0000061473" description="Cytochrome b">
    <location>
        <begin position="1"/>
        <end position="380"/>
    </location>
</feature>
<feature type="transmembrane region" description="Helical" evidence="2">
    <location>
        <begin position="33"/>
        <end position="53"/>
    </location>
</feature>
<feature type="transmembrane region" description="Helical" evidence="2">
    <location>
        <begin position="77"/>
        <end position="98"/>
    </location>
</feature>
<feature type="transmembrane region" description="Helical" evidence="2">
    <location>
        <begin position="113"/>
        <end position="133"/>
    </location>
</feature>
<feature type="transmembrane region" description="Helical" evidence="2">
    <location>
        <begin position="178"/>
        <end position="198"/>
    </location>
</feature>
<feature type="transmembrane region" description="Helical" evidence="2">
    <location>
        <begin position="226"/>
        <end position="246"/>
    </location>
</feature>
<feature type="transmembrane region" description="Helical" evidence="2">
    <location>
        <begin position="288"/>
        <end position="308"/>
    </location>
</feature>
<feature type="transmembrane region" description="Helical" evidence="2">
    <location>
        <begin position="320"/>
        <end position="340"/>
    </location>
</feature>
<feature type="transmembrane region" description="Helical" evidence="2">
    <location>
        <begin position="347"/>
        <end position="367"/>
    </location>
</feature>
<feature type="binding site" description="axial binding residue" evidence="2">
    <location>
        <position position="83"/>
    </location>
    <ligand>
        <name>heme b</name>
        <dbReference type="ChEBI" id="CHEBI:60344"/>
        <label>b562</label>
    </ligand>
    <ligandPart>
        <name>Fe</name>
        <dbReference type="ChEBI" id="CHEBI:18248"/>
    </ligandPart>
</feature>
<feature type="binding site" description="axial binding residue" evidence="2">
    <location>
        <position position="97"/>
    </location>
    <ligand>
        <name>heme b</name>
        <dbReference type="ChEBI" id="CHEBI:60344"/>
        <label>b566</label>
    </ligand>
    <ligandPart>
        <name>Fe</name>
        <dbReference type="ChEBI" id="CHEBI:18248"/>
    </ligandPart>
</feature>
<feature type="binding site" description="axial binding residue" evidence="2">
    <location>
        <position position="182"/>
    </location>
    <ligand>
        <name>heme b</name>
        <dbReference type="ChEBI" id="CHEBI:60344"/>
        <label>b562</label>
    </ligand>
    <ligandPart>
        <name>Fe</name>
        <dbReference type="ChEBI" id="CHEBI:18248"/>
    </ligandPart>
</feature>
<feature type="binding site" description="axial binding residue" evidence="2">
    <location>
        <position position="196"/>
    </location>
    <ligand>
        <name>heme b</name>
        <dbReference type="ChEBI" id="CHEBI:60344"/>
        <label>b566</label>
    </ligand>
    <ligandPart>
        <name>Fe</name>
        <dbReference type="ChEBI" id="CHEBI:18248"/>
    </ligandPart>
</feature>
<feature type="binding site" evidence="2">
    <location>
        <position position="201"/>
    </location>
    <ligand>
        <name>a ubiquinone</name>
        <dbReference type="ChEBI" id="CHEBI:16389"/>
    </ligand>
</feature>
<proteinExistence type="inferred from homology"/>
<evidence type="ECO:0000250" key="1"/>
<evidence type="ECO:0000250" key="2">
    <source>
        <dbReference type="UniProtKB" id="P00157"/>
    </source>
</evidence>
<evidence type="ECO:0000255" key="3">
    <source>
        <dbReference type="PROSITE-ProRule" id="PRU00967"/>
    </source>
</evidence>
<evidence type="ECO:0000255" key="4">
    <source>
        <dbReference type="PROSITE-ProRule" id="PRU00968"/>
    </source>
</evidence>